<name>URK_CLOTE</name>
<gene>
    <name evidence="1" type="primary">udk</name>
    <name type="ordered locus">CTC_01064</name>
</gene>
<accession>Q896E3</accession>
<dbReference type="EC" id="2.7.1.48" evidence="1"/>
<dbReference type="EMBL" id="AE015927">
    <property type="protein sequence ID" value="AAO35647.1"/>
    <property type="molecule type" value="Genomic_DNA"/>
</dbReference>
<dbReference type="RefSeq" id="WP_011099309.1">
    <property type="nucleotide sequence ID" value="NC_004557.1"/>
</dbReference>
<dbReference type="SMR" id="Q896E3"/>
<dbReference type="STRING" id="212717.CTC_01064"/>
<dbReference type="GeneID" id="24255068"/>
<dbReference type="KEGG" id="ctc:CTC_01064"/>
<dbReference type="HOGENOM" id="CLU_021278_1_2_9"/>
<dbReference type="OrthoDB" id="9777642at2"/>
<dbReference type="UniPathway" id="UPA00574">
    <property type="reaction ID" value="UER00637"/>
</dbReference>
<dbReference type="UniPathway" id="UPA00579">
    <property type="reaction ID" value="UER00640"/>
</dbReference>
<dbReference type="Proteomes" id="UP000001412">
    <property type="component" value="Chromosome"/>
</dbReference>
<dbReference type="GO" id="GO:0005737">
    <property type="term" value="C:cytoplasm"/>
    <property type="evidence" value="ECO:0007669"/>
    <property type="project" value="UniProtKB-SubCell"/>
</dbReference>
<dbReference type="GO" id="GO:0005524">
    <property type="term" value="F:ATP binding"/>
    <property type="evidence" value="ECO:0007669"/>
    <property type="project" value="UniProtKB-UniRule"/>
</dbReference>
<dbReference type="GO" id="GO:0043771">
    <property type="term" value="F:cytidine kinase activity"/>
    <property type="evidence" value="ECO:0007669"/>
    <property type="project" value="RHEA"/>
</dbReference>
<dbReference type="GO" id="GO:0004849">
    <property type="term" value="F:uridine kinase activity"/>
    <property type="evidence" value="ECO:0007669"/>
    <property type="project" value="UniProtKB-UniRule"/>
</dbReference>
<dbReference type="GO" id="GO:0044211">
    <property type="term" value="P:CTP salvage"/>
    <property type="evidence" value="ECO:0007669"/>
    <property type="project" value="UniProtKB-UniRule"/>
</dbReference>
<dbReference type="GO" id="GO:0044206">
    <property type="term" value="P:UMP salvage"/>
    <property type="evidence" value="ECO:0007669"/>
    <property type="project" value="UniProtKB-UniRule"/>
</dbReference>
<dbReference type="CDD" id="cd02023">
    <property type="entry name" value="UMPK"/>
    <property type="match status" value="1"/>
</dbReference>
<dbReference type="Gene3D" id="3.40.50.300">
    <property type="entry name" value="P-loop containing nucleotide triphosphate hydrolases"/>
    <property type="match status" value="1"/>
</dbReference>
<dbReference type="HAMAP" id="MF_00551">
    <property type="entry name" value="Uridine_kinase"/>
    <property type="match status" value="1"/>
</dbReference>
<dbReference type="InterPro" id="IPR027417">
    <property type="entry name" value="P-loop_NTPase"/>
</dbReference>
<dbReference type="InterPro" id="IPR006083">
    <property type="entry name" value="PRK/URK"/>
</dbReference>
<dbReference type="InterPro" id="IPR026008">
    <property type="entry name" value="Uridine_kinase"/>
</dbReference>
<dbReference type="InterPro" id="IPR000764">
    <property type="entry name" value="Uridine_kinase-like"/>
</dbReference>
<dbReference type="NCBIfam" id="NF004018">
    <property type="entry name" value="PRK05480.1"/>
    <property type="match status" value="1"/>
</dbReference>
<dbReference type="NCBIfam" id="TIGR00235">
    <property type="entry name" value="udk"/>
    <property type="match status" value="1"/>
</dbReference>
<dbReference type="PANTHER" id="PTHR10285">
    <property type="entry name" value="URIDINE KINASE"/>
    <property type="match status" value="1"/>
</dbReference>
<dbReference type="Pfam" id="PF00485">
    <property type="entry name" value="PRK"/>
    <property type="match status" value="1"/>
</dbReference>
<dbReference type="PRINTS" id="PR00988">
    <property type="entry name" value="URIDINKINASE"/>
</dbReference>
<dbReference type="SUPFAM" id="SSF52540">
    <property type="entry name" value="P-loop containing nucleoside triphosphate hydrolases"/>
    <property type="match status" value="1"/>
</dbReference>
<comment type="catalytic activity">
    <reaction evidence="1">
        <text>uridine + ATP = UMP + ADP + H(+)</text>
        <dbReference type="Rhea" id="RHEA:16825"/>
        <dbReference type="ChEBI" id="CHEBI:15378"/>
        <dbReference type="ChEBI" id="CHEBI:16704"/>
        <dbReference type="ChEBI" id="CHEBI:30616"/>
        <dbReference type="ChEBI" id="CHEBI:57865"/>
        <dbReference type="ChEBI" id="CHEBI:456216"/>
        <dbReference type="EC" id="2.7.1.48"/>
    </reaction>
</comment>
<comment type="catalytic activity">
    <reaction evidence="1">
        <text>cytidine + ATP = CMP + ADP + H(+)</text>
        <dbReference type="Rhea" id="RHEA:24674"/>
        <dbReference type="ChEBI" id="CHEBI:15378"/>
        <dbReference type="ChEBI" id="CHEBI:17562"/>
        <dbReference type="ChEBI" id="CHEBI:30616"/>
        <dbReference type="ChEBI" id="CHEBI:60377"/>
        <dbReference type="ChEBI" id="CHEBI:456216"/>
        <dbReference type="EC" id="2.7.1.48"/>
    </reaction>
</comment>
<comment type="pathway">
    <text evidence="1">Pyrimidine metabolism; CTP biosynthesis via salvage pathway; CTP from cytidine: step 1/3.</text>
</comment>
<comment type="pathway">
    <text evidence="1">Pyrimidine metabolism; UMP biosynthesis via salvage pathway; UMP from uridine: step 1/1.</text>
</comment>
<comment type="subcellular location">
    <subcellularLocation>
        <location evidence="1">Cytoplasm</location>
    </subcellularLocation>
</comment>
<comment type="similarity">
    <text evidence="1">Belongs to the uridine kinase family.</text>
</comment>
<proteinExistence type="inferred from homology"/>
<keyword id="KW-0067">ATP-binding</keyword>
<keyword id="KW-0963">Cytoplasm</keyword>
<keyword id="KW-0418">Kinase</keyword>
<keyword id="KW-0547">Nucleotide-binding</keyword>
<keyword id="KW-1185">Reference proteome</keyword>
<keyword id="KW-0808">Transferase</keyword>
<protein>
    <recommendedName>
        <fullName evidence="1">Uridine kinase</fullName>
        <ecNumber evidence="1">2.7.1.48</ecNumber>
    </recommendedName>
    <alternativeName>
        <fullName evidence="1">Cytidine monophosphokinase</fullName>
    </alternativeName>
    <alternativeName>
        <fullName evidence="1">Uridine monophosphokinase</fullName>
    </alternativeName>
</protein>
<reference key="1">
    <citation type="journal article" date="2003" name="Proc. Natl. Acad. Sci. U.S.A.">
        <title>The genome sequence of Clostridium tetani, the causative agent of tetanus disease.</title>
        <authorList>
            <person name="Brueggemann H."/>
            <person name="Baeumer S."/>
            <person name="Fricke W.F."/>
            <person name="Wiezer A."/>
            <person name="Liesegang H."/>
            <person name="Decker I."/>
            <person name="Herzberg C."/>
            <person name="Martinez-Arias R."/>
            <person name="Merkl R."/>
            <person name="Henne A."/>
            <person name="Gottschalk G."/>
        </authorList>
    </citation>
    <scope>NUCLEOTIDE SEQUENCE [LARGE SCALE GENOMIC DNA]</scope>
    <source>
        <strain>Massachusetts / E88</strain>
    </source>
</reference>
<evidence type="ECO:0000255" key="1">
    <source>
        <dbReference type="HAMAP-Rule" id="MF_00551"/>
    </source>
</evidence>
<sequence length="209" mass="24320">MSKRPILIGITGGTGSGKSTVSKEICRRFDKELIVMIEQDSYYKDQSHLSIEERVKTNYDHPNAFDTELLVKHLKELSYWSKVEKPIYDFELHNRKNETEIVEPTEIIIVEGILVLEEKEIRDLLDIKIYVDTDADVRIIRRLVRDIKERGRSLDSVINQYLNVVRPMHMQFIEPSKRYADIIIPEGGHNKVAIDIIVGNIKQMVQKSE</sequence>
<feature type="chain" id="PRO_0000164468" description="Uridine kinase">
    <location>
        <begin position="1"/>
        <end position="209"/>
    </location>
</feature>
<feature type="binding site" evidence="1">
    <location>
        <begin position="12"/>
        <end position="19"/>
    </location>
    <ligand>
        <name>ATP</name>
        <dbReference type="ChEBI" id="CHEBI:30616"/>
    </ligand>
</feature>
<organism>
    <name type="scientific">Clostridium tetani (strain Massachusetts / E88)</name>
    <dbReference type="NCBI Taxonomy" id="212717"/>
    <lineage>
        <taxon>Bacteria</taxon>
        <taxon>Bacillati</taxon>
        <taxon>Bacillota</taxon>
        <taxon>Clostridia</taxon>
        <taxon>Eubacteriales</taxon>
        <taxon>Clostridiaceae</taxon>
        <taxon>Clostridium</taxon>
    </lineage>
</organism>